<comment type="subcellular location">
    <subcellularLocation>
        <location>Plastid</location>
        <location>Chloroplast</location>
    </subcellularLocation>
</comment>
<comment type="similarity">
    <text evidence="2">Belongs to the HesB/IscA family. Ycf83 subfamily.</text>
</comment>
<evidence type="ECO:0000250" key="1">
    <source>
        <dbReference type="UniProtKB" id="P0AAC8"/>
    </source>
</evidence>
<evidence type="ECO:0000305" key="2"/>
<protein>
    <recommendedName>
        <fullName>Uncharacterized protein ycf83</fullName>
    </recommendedName>
    <alternativeName>
        <fullName>ORF339</fullName>
    </alternativeName>
</protein>
<gene>
    <name type="primary">ycf83</name>
</gene>
<organism>
    <name type="scientific">Galdieria sulphuraria</name>
    <name type="common">Red alga</name>
    <dbReference type="NCBI Taxonomy" id="130081"/>
    <lineage>
        <taxon>Eukaryota</taxon>
        <taxon>Rhodophyta</taxon>
        <taxon>Bangiophyceae</taxon>
        <taxon>Galdieriales</taxon>
        <taxon>Galdieriaceae</taxon>
        <taxon>Galdieria</taxon>
    </lineage>
</organism>
<sequence length="112" mass="12530">MNTYNINITKSALDHLNSISKLNSEDKLYIRIGIKQGGCSGLSYFMTYEKKSNISDNDLVYDYDNFTLVCDNKSILYLYGISLDYSSSLIDGGFKFLNPNAKQTCGCGKSFS</sequence>
<proteinExistence type="inferred from homology"/>
<dbReference type="EMBL" id="AF233069">
    <property type="protein sequence ID" value="AAF81679.1"/>
    <property type="molecule type" value="Genomic_DNA"/>
</dbReference>
<dbReference type="SMR" id="Q9MSA1"/>
<dbReference type="eggNOG" id="KOG1120">
    <property type="taxonomic scope" value="Eukaryota"/>
</dbReference>
<dbReference type="GO" id="GO:0009570">
    <property type="term" value="C:chloroplast stroma"/>
    <property type="evidence" value="ECO:0007669"/>
    <property type="project" value="TreeGrafter"/>
</dbReference>
<dbReference type="GO" id="GO:0051536">
    <property type="term" value="F:iron-sulfur cluster binding"/>
    <property type="evidence" value="ECO:0007669"/>
    <property type="project" value="InterPro"/>
</dbReference>
<dbReference type="GO" id="GO:0046872">
    <property type="term" value="F:metal ion binding"/>
    <property type="evidence" value="ECO:0007669"/>
    <property type="project" value="UniProtKB-KW"/>
</dbReference>
<dbReference type="GO" id="GO:0030674">
    <property type="term" value="F:protein-macromolecule adaptor activity"/>
    <property type="evidence" value="ECO:0007669"/>
    <property type="project" value="TreeGrafter"/>
</dbReference>
<dbReference type="GO" id="GO:0016226">
    <property type="term" value="P:iron-sulfur cluster assembly"/>
    <property type="evidence" value="ECO:0007669"/>
    <property type="project" value="InterPro"/>
</dbReference>
<dbReference type="Gene3D" id="2.60.300.12">
    <property type="entry name" value="HesB-like domain"/>
    <property type="match status" value="1"/>
</dbReference>
<dbReference type="InterPro" id="IPR000361">
    <property type="entry name" value="FeS_biogenesis"/>
</dbReference>
<dbReference type="InterPro" id="IPR016092">
    <property type="entry name" value="FeS_cluster_insertion"/>
</dbReference>
<dbReference type="InterPro" id="IPR017870">
    <property type="entry name" value="FeS_cluster_insertion_CS"/>
</dbReference>
<dbReference type="InterPro" id="IPR035903">
    <property type="entry name" value="HesB-like_dom_sf"/>
</dbReference>
<dbReference type="InterPro" id="IPR031108">
    <property type="entry name" value="ISCA_plant_cyanobact"/>
</dbReference>
<dbReference type="NCBIfam" id="TIGR00049">
    <property type="entry name" value="iron-sulfur cluster assembly accessory protein"/>
    <property type="match status" value="1"/>
</dbReference>
<dbReference type="PANTHER" id="PTHR47265">
    <property type="entry name" value="IRON-SULFUR ASSEMBLY PROTEIN ISCA, CHLOROPLASTIC"/>
    <property type="match status" value="1"/>
</dbReference>
<dbReference type="PANTHER" id="PTHR47265:SF1">
    <property type="entry name" value="IRON-SULFUR ASSEMBLY PROTEIN ISCA, CHLOROPLASTIC"/>
    <property type="match status" value="1"/>
</dbReference>
<dbReference type="Pfam" id="PF01521">
    <property type="entry name" value="Fe-S_biosyn"/>
    <property type="match status" value="1"/>
</dbReference>
<dbReference type="SUPFAM" id="SSF89360">
    <property type="entry name" value="HesB-like domain"/>
    <property type="match status" value="1"/>
</dbReference>
<dbReference type="PROSITE" id="PS01152">
    <property type="entry name" value="HESB"/>
    <property type="match status" value="1"/>
</dbReference>
<accession>Q9MSA1</accession>
<keyword id="KW-0150">Chloroplast</keyword>
<keyword id="KW-0408">Iron</keyword>
<keyword id="KW-0479">Metal-binding</keyword>
<keyword id="KW-0934">Plastid</keyword>
<name>YCF83_GALSU</name>
<geneLocation type="chloroplast"/>
<feature type="chain" id="PRO_0000076988" description="Uncharacterized protein ycf83">
    <location>
        <begin position="1"/>
        <end position="112"/>
    </location>
</feature>
<feature type="binding site" evidence="1">
    <location>
        <position position="39"/>
    </location>
    <ligand>
        <name>Fe cation</name>
        <dbReference type="ChEBI" id="CHEBI:24875"/>
    </ligand>
</feature>
<feature type="binding site" evidence="1">
    <location>
        <position position="105"/>
    </location>
    <ligand>
        <name>Fe cation</name>
        <dbReference type="ChEBI" id="CHEBI:24875"/>
    </ligand>
</feature>
<feature type="binding site" evidence="1">
    <location>
        <position position="107"/>
    </location>
    <ligand>
        <name>Fe cation</name>
        <dbReference type="ChEBI" id="CHEBI:24875"/>
    </ligand>
</feature>
<reference key="1">
    <citation type="submission" date="2000-02" db="EMBL/GenBank/DDBJ databases">
        <authorList>
            <person name="Whitney S.M."/>
            <person name="Andrews J."/>
        </authorList>
    </citation>
    <scope>NUCLEOTIDE SEQUENCE [GENOMIC DNA]</scope>
    <source>
        <strain>UTEX 2393</strain>
    </source>
</reference>